<name>RECA_AGRFC</name>
<proteinExistence type="inferred from homology"/>
<reference key="1">
    <citation type="journal article" date="1992" name="Gene">
        <title>Molecular analysis of the recA gene of Agrobacterium tumefaciens C58.</title>
        <authorList>
            <person name="Wardhan H."/>
            <person name="McPherson M.J."/>
            <person name="Harris C.A."/>
            <person name="Sharma E."/>
            <person name="Sastry G.R.K."/>
        </authorList>
    </citation>
    <scope>NUCLEOTIDE SEQUENCE [GENOMIC DNA]</scope>
</reference>
<reference key="2">
    <citation type="journal article" date="2001" name="Science">
        <title>The genome of the natural genetic engineer Agrobacterium tumefaciens C58.</title>
        <authorList>
            <person name="Wood D.W."/>
            <person name="Setubal J.C."/>
            <person name="Kaul R."/>
            <person name="Monks D.E."/>
            <person name="Kitajima J.P."/>
            <person name="Okura V.K."/>
            <person name="Zhou Y."/>
            <person name="Chen L."/>
            <person name="Wood G.E."/>
            <person name="Almeida N.F. Jr."/>
            <person name="Woo L."/>
            <person name="Chen Y."/>
            <person name="Paulsen I.T."/>
            <person name="Eisen J.A."/>
            <person name="Karp P.D."/>
            <person name="Bovee D. Sr."/>
            <person name="Chapman P."/>
            <person name="Clendenning J."/>
            <person name="Deatherage G."/>
            <person name="Gillet W."/>
            <person name="Grant C."/>
            <person name="Kutyavin T."/>
            <person name="Levy R."/>
            <person name="Li M.-J."/>
            <person name="McClelland E."/>
            <person name="Palmieri A."/>
            <person name="Raymond C."/>
            <person name="Rouse G."/>
            <person name="Saenphimmachak C."/>
            <person name="Wu Z."/>
            <person name="Romero P."/>
            <person name="Gordon D."/>
            <person name="Zhang S."/>
            <person name="Yoo H."/>
            <person name="Tao Y."/>
            <person name="Biddle P."/>
            <person name="Jung M."/>
            <person name="Krespan W."/>
            <person name="Perry M."/>
            <person name="Gordon-Kamm B."/>
            <person name="Liao L."/>
            <person name="Kim S."/>
            <person name="Hendrick C."/>
            <person name="Zhao Z.-Y."/>
            <person name="Dolan M."/>
            <person name="Chumley F."/>
            <person name="Tingey S.V."/>
            <person name="Tomb J.-F."/>
            <person name="Gordon M.P."/>
            <person name="Olson M.V."/>
            <person name="Nester E.W."/>
        </authorList>
    </citation>
    <scope>NUCLEOTIDE SEQUENCE [LARGE SCALE GENOMIC DNA]</scope>
    <source>
        <strain>C58 / ATCC 33970</strain>
    </source>
</reference>
<reference key="3">
    <citation type="journal article" date="2001" name="Science">
        <title>Genome sequence of the plant pathogen and biotechnology agent Agrobacterium tumefaciens C58.</title>
        <authorList>
            <person name="Goodner B."/>
            <person name="Hinkle G."/>
            <person name="Gattung S."/>
            <person name="Miller N."/>
            <person name="Blanchard M."/>
            <person name="Qurollo B."/>
            <person name="Goldman B.S."/>
            <person name="Cao Y."/>
            <person name="Askenazi M."/>
            <person name="Halling C."/>
            <person name="Mullin L."/>
            <person name="Houmiel K."/>
            <person name="Gordon J."/>
            <person name="Vaudin M."/>
            <person name="Iartchouk O."/>
            <person name="Epp A."/>
            <person name="Liu F."/>
            <person name="Wollam C."/>
            <person name="Allinger M."/>
            <person name="Doughty D."/>
            <person name="Scott C."/>
            <person name="Lappas C."/>
            <person name="Markelz B."/>
            <person name="Flanagan C."/>
            <person name="Crowell C."/>
            <person name="Gurson J."/>
            <person name="Lomo C."/>
            <person name="Sear C."/>
            <person name="Strub G."/>
            <person name="Cielo C."/>
            <person name="Slater S."/>
        </authorList>
    </citation>
    <scope>NUCLEOTIDE SEQUENCE [LARGE SCALE GENOMIC DNA]</scope>
    <source>
        <strain>C58 / ATCC 33970</strain>
    </source>
</reference>
<dbReference type="EMBL" id="L07902">
    <property type="status" value="NOT_ANNOTATED_CDS"/>
    <property type="molecule type" value="Genomic_DNA"/>
</dbReference>
<dbReference type="EMBL" id="AE007869">
    <property type="protein sequence ID" value="AAK87640.2"/>
    <property type="molecule type" value="Genomic_DNA"/>
</dbReference>
<dbReference type="PIR" id="AH2806">
    <property type="entry name" value="AH2806"/>
</dbReference>
<dbReference type="PIR" id="G97585">
    <property type="entry name" value="G97585"/>
</dbReference>
<dbReference type="PIR" id="JC1377">
    <property type="entry name" value="JC1377"/>
</dbReference>
<dbReference type="RefSeq" id="NP_354855.2">
    <property type="nucleotide sequence ID" value="NC_003062.2"/>
</dbReference>
<dbReference type="RefSeq" id="WP_006314063.1">
    <property type="nucleotide sequence ID" value="NC_003062.2"/>
</dbReference>
<dbReference type="SMR" id="P33156"/>
<dbReference type="STRING" id="176299.Atu1874"/>
<dbReference type="EnsemblBacteria" id="AAK87640">
    <property type="protein sequence ID" value="AAK87640"/>
    <property type="gene ID" value="Atu1874"/>
</dbReference>
<dbReference type="GeneID" id="1133912"/>
<dbReference type="KEGG" id="atu:Atu1874"/>
<dbReference type="PATRIC" id="fig|176299.10.peg.1888"/>
<dbReference type="eggNOG" id="COG0468">
    <property type="taxonomic scope" value="Bacteria"/>
</dbReference>
<dbReference type="HOGENOM" id="CLU_040469_1_2_5"/>
<dbReference type="OrthoDB" id="9776733at2"/>
<dbReference type="PhylomeDB" id="P33156"/>
<dbReference type="BioCyc" id="AGRO:ATU1874-MONOMER"/>
<dbReference type="Proteomes" id="UP000000813">
    <property type="component" value="Chromosome circular"/>
</dbReference>
<dbReference type="GO" id="GO:0005829">
    <property type="term" value="C:cytosol"/>
    <property type="evidence" value="ECO:0007669"/>
    <property type="project" value="TreeGrafter"/>
</dbReference>
<dbReference type="GO" id="GO:0005524">
    <property type="term" value="F:ATP binding"/>
    <property type="evidence" value="ECO:0007669"/>
    <property type="project" value="UniProtKB-UniRule"/>
</dbReference>
<dbReference type="GO" id="GO:0016887">
    <property type="term" value="F:ATP hydrolysis activity"/>
    <property type="evidence" value="ECO:0007669"/>
    <property type="project" value="InterPro"/>
</dbReference>
<dbReference type="GO" id="GO:0140664">
    <property type="term" value="F:ATP-dependent DNA damage sensor activity"/>
    <property type="evidence" value="ECO:0007669"/>
    <property type="project" value="InterPro"/>
</dbReference>
<dbReference type="GO" id="GO:0003684">
    <property type="term" value="F:damaged DNA binding"/>
    <property type="evidence" value="ECO:0007669"/>
    <property type="project" value="UniProtKB-UniRule"/>
</dbReference>
<dbReference type="GO" id="GO:0003697">
    <property type="term" value="F:single-stranded DNA binding"/>
    <property type="evidence" value="ECO:0007669"/>
    <property type="project" value="UniProtKB-UniRule"/>
</dbReference>
<dbReference type="GO" id="GO:0006310">
    <property type="term" value="P:DNA recombination"/>
    <property type="evidence" value="ECO:0007669"/>
    <property type="project" value="UniProtKB-UniRule"/>
</dbReference>
<dbReference type="GO" id="GO:0006281">
    <property type="term" value="P:DNA repair"/>
    <property type="evidence" value="ECO:0007669"/>
    <property type="project" value="UniProtKB-UniRule"/>
</dbReference>
<dbReference type="GO" id="GO:0009432">
    <property type="term" value="P:SOS response"/>
    <property type="evidence" value="ECO:0007669"/>
    <property type="project" value="UniProtKB-UniRule"/>
</dbReference>
<dbReference type="CDD" id="cd00983">
    <property type="entry name" value="RecA"/>
    <property type="match status" value="1"/>
</dbReference>
<dbReference type="FunFam" id="3.40.50.300:FF:000087">
    <property type="entry name" value="Recombinase RecA"/>
    <property type="match status" value="1"/>
</dbReference>
<dbReference type="Gene3D" id="3.40.50.300">
    <property type="entry name" value="P-loop containing nucleotide triphosphate hydrolases"/>
    <property type="match status" value="1"/>
</dbReference>
<dbReference type="HAMAP" id="MF_00268">
    <property type="entry name" value="RecA"/>
    <property type="match status" value="1"/>
</dbReference>
<dbReference type="InterPro" id="IPR003593">
    <property type="entry name" value="AAA+_ATPase"/>
</dbReference>
<dbReference type="InterPro" id="IPR013765">
    <property type="entry name" value="DNA_recomb/repair_RecA"/>
</dbReference>
<dbReference type="InterPro" id="IPR020584">
    <property type="entry name" value="DNA_recomb/repair_RecA_CS"/>
</dbReference>
<dbReference type="InterPro" id="IPR027417">
    <property type="entry name" value="P-loop_NTPase"/>
</dbReference>
<dbReference type="InterPro" id="IPR049261">
    <property type="entry name" value="RecA-like_C"/>
</dbReference>
<dbReference type="InterPro" id="IPR049428">
    <property type="entry name" value="RecA-like_N"/>
</dbReference>
<dbReference type="InterPro" id="IPR020588">
    <property type="entry name" value="RecA_ATP-bd"/>
</dbReference>
<dbReference type="InterPro" id="IPR023400">
    <property type="entry name" value="RecA_C_sf"/>
</dbReference>
<dbReference type="InterPro" id="IPR020587">
    <property type="entry name" value="RecA_monomer-monomer_interface"/>
</dbReference>
<dbReference type="NCBIfam" id="TIGR02012">
    <property type="entry name" value="tigrfam_recA"/>
    <property type="match status" value="1"/>
</dbReference>
<dbReference type="PANTHER" id="PTHR45900:SF1">
    <property type="entry name" value="MITOCHONDRIAL DNA REPAIR PROTEIN RECA HOMOLOG-RELATED"/>
    <property type="match status" value="1"/>
</dbReference>
<dbReference type="PANTHER" id="PTHR45900">
    <property type="entry name" value="RECA"/>
    <property type="match status" value="1"/>
</dbReference>
<dbReference type="Pfam" id="PF00154">
    <property type="entry name" value="RecA"/>
    <property type="match status" value="1"/>
</dbReference>
<dbReference type="Pfam" id="PF21096">
    <property type="entry name" value="RecA_C"/>
    <property type="match status" value="1"/>
</dbReference>
<dbReference type="PRINTS" id="PR00142">
    <property type="entry name" value="RECA"/>
</dbReference>
<dbReference type="SMART" id="SM00382">
    <property type="entry name" value="AAA"/>
    <property type="match status" value="1"/>
</dbReference>
<dbReference type="SUPFAM" id="SSF52540">
    <property type="entry name" value="P-loop containing nucleoside triphosphate hydrolases"/>
    <property type="match status" value="1"/>
</dbReference>
<dbReference type="SUPFAM" id="SSF54752">
    <property type="entry name" value="RecA protein, C-terminal domain"/>
    <property type="match status" value="1"/>
</dbReference>
<dbReference type="PROSITE" id="PS00321">
    <property type="entry name" value="RECA_1"/>
    <property type="match status" value="1"/>
</dbReference>
<dbReference type="PROSITE" id="PS50162">
    <property type="entry name" value="RECA_2"/>
    <property type="match status" value="1"/>
</dbReference>
<dbReference type="PROSITE" id="PS50163">
    <property type="entry name" value="RECA_3"/>
    <property type="match status" value="1"/>
</dbReference>
<organism>
    <name type="scientific">Agrobacterium fabrum (strain C58 / ATCC 33970)</name>
    <name type="common">Agrobacterium tumefaciens (strain C58)</name>
    <dbReference type="NCBI Taxonomy" id="176299"/>
    <lineage>
        <taxon>Bacteria</taxon>
        <taxon>Pseudomonadati</taxon>
        <taxon>Pseudomonadota</taxon>
        <taxon>Alphaproteobacteria</taxon>
        <taxon>Hyphomicrobiales</taxon>
        <taxon>Rhizobiaceae</taxon>
        <taxon>Rhizobium/Agrobacterium group</taxon>
        <taxon>Agrobacterium</taxon>
        <taxon>Agrobacterium tumefaciens complex</taxon>
    </lineage>
</organism>
<feature type="chain" id="PRO_0000122636" description="Protein RecA">
    <location>
        <begin position="1"/>
        <end position="363"/>
    </location>
</feature>
<feature type="binding site" evidence="1">
    <location>
        <begin position="77"/>
        <end position="84"/>
    </location>
    <ligand>
        <name>ATP</name>
        <dbReference type="ChEBI" id="CHEBI:30616"/>
    </ligand>
</feature>
<evidence type="ECO:0000255" key="1">
    <source>
        <dbReference type="HAMAP-Rule" id="MF_00268"/>
    </source>
</evidence>
<accession>P33156</accession>
<gene>
    <name evidence="1" type="primary">recA</name>
    <name type="ordered locus">Atu1874</name>
    <name type="ORF">AGR_C_3441</name>
</gene>
<sequence>MAQNSLRLVEDKSVDKSKALEAALSQIERSFGKGSIMKLGSNENVVEVETVSTGSLSLDIALGIGGLPKGRIIEIYGPESSGKTTLALQTIAEAQKKGGICAFVDAEHALDPVYARKLGVDLQSLLISQPDTGEQALEITDTLVRSGAVDVLVIDSVAALTPRAEIEGEMGDSLPGLQARLMSQALRKLTASISKSKCMVIFINQIRMKIGVMFGSPETTTGGNALKFYASVRLDIRRIGAVKEREEVVGNQTRVKVVKNKMAPPFKQVEFDIMYGEGVSKTGELVDLGVKAGIVEKSGAWFSYNSQRLGQGRENAKTFLRDNPDTANEIELALRQNAGLIADRFLQNGGPDAGEGDDGSDEG</sequence>
<comment type="function">
    <text>Can catalyze the hydrolysis of ATP in the presence of single-stranded DNA, the ATP-dependent uptake of single-stranded DNA by duplex DNA, and the ATP-dependent hybridization of homologous single-stranded DNAs. It interacts with LexA causing its activation and leading to its autocatalytic cleavage.</text>
</comment>
<comment type="subcellular location">
    <subcellularLocation>
        <location evidence="1">Cytoplasm</location>
    </subcellularLocation>
</comment>
<comment type="similarity">
    <text evidence="1">Belongs to the RecA family.</text>
</comment>
<protein>
    <recommendedName>
        <fullName evidence="1">Protein RecA</fullName>
    </recommendedName>
    <alternativeName>
        <fullName evidence="1">Recombinase A</fullName>
    </alternativeName>
</protein>
<keyword id="KW-0067">ATP-binding</keyword>
<keyword id="KW-0963">Cytoplasm</keyword>
<keyword id="KW-0227">DNA damage</keyword>
<keyword id="KW-0233">DNA recombination</keyword>
<keyword id="KW-0234">DNA repair</keyword>
<keyword id="KW-0238">DNA-binding</keyword>
<keyword id="KW-0547">Nucleotide-binding</keyword>
<keyword id="KW-1185">Reference proteome</keyword>
<keyword id="KW-0742">SOS response</keyword>